<name>EFG1_ANADE</name>
<gene>
    <name evidence="1" type="primary">fusA1</name>
    <name type="ordered locus">Adeh_1948</name>
</gene>
<organism>
    <name type="scientific">Anaeromyxobacter dehalogenans (strain 2CP-C)</name>
    <dbReference type="NCBI Taxonomy" id="290397"/>
    <lineage>
        <taxon>Bacteria</taxon>
        <taxon>Pseudomonadati</taxon>
        <taxon>Myxococcota</taxon>
        <taxon>Myxococcia</taxon>
        <taxon>Myxococcales</taxon>
        <taxon>Cystobacterineae</taxon>
        <taxon>Anaeromyxobacteraceae</taxon>
        <taxon>Anaeromyxobacter</taxon>
    </lineage>
</organism>
<proteinExistence type="inferred from homology"/>
<feature type="chain" id="PRO_0000263423" description="Elongation factor G 1">
    <location>
        <begin position="1"/>
        <end position="697"/>
    </location>
</feature>
<feature type="domain" description="tr-type G">
    <location>
        <begin position="8"/>
        <end position="283"/>
    </location>
</feature>
<feature type="binding site" evidence="1">
    <location>
        <begin position="17"/>
        <end position="24"/>
    </location>
    <ligand>
        <name>GTP</name>
        <dbReference type="ChEBI" id="CHEBI:37565"/>
    </ligand>
</feature>
<feature type="binding site" evidence="1">
    <location>
        <begin position="81"/>
        <end position="85"/>
    </location>
    <ligand>
        <name>GTP</name>
        <dbReference type="ChEBI" id="CHEBI:37565"/>
    </ligand>
</feature>
<feature type="binding site" evidence="1">
    <location>
        <begin position="135"/>
        <end position="138"/>
    </location>
    <ligand>
        <name>GTP</name>
        <dbReference type="ChEBI" id="CHEBI:37565"/>
    </ligand>
</feature>
<keyword id="KW-0963">Cytoplasm</keyword>
<keyword id="KW-0251">Elongation factor</keyword>
<keyword id="KW-0342">GTP-binding</keyword>
<keyword id="KW-0547">Nucleotide-binding</keyword>
<keyword id="KW-0648">Protein biosynthesis</keyword>
<keyword id="KW-1185">Reference proteome</keyword>
<dbReference type="EMBL" id="CP000251">
    <property type="protein sequence ID" value="ABC81719.1"/>
    <property type="molecule type" value="Genomic_DNA"/>
</dbReference>
<dbReference type="RefSeq" id="WP_011421001.1">
    <property type="nucleotide sequence ID" value="NC_007760.1"/>
</dbReference>
<dbReference type="SMR" id="Q2IJ93"/>
<dbReference type="STRING" id="290397.Adeh_1948"/>
<dbReference type="KEGG" id="ade:Adeh_1948"/>
<dbReference type="eggNOG" id="COG0480">
    <property type="taxonomic scope" value="Bacteria"/>
</dbReference>
<dbReference type="HOGENOM" id="CLU_002794_4_1_7"/>
<dbReference type="OrthoDB" id="9801591at2"/>
<dbReference type="Proteomes" id="UP000001935">
    <property type="component" value="Chromosome"/>
</dbReference>
<dbReference type="GO" id="GO:0005737">
    <property type="term" value="C:cytoplasm"/>
    <property type="evidence" value="ECO:0007669"/>
    <property type="project" value="UniProtKB-SubCell"/>
</dbReference>
<dbReference type="GO" id="GO:0005525">
    <property type="term" value="F:GTP binding"/>
    <property type="evidence" value="ECO:0007669"/>
    <property type="project" value="UniProtKB-UniRule"/>
</dbReference>
<dbReference type="GO" id="GO:0003924">
    <property type="term" value="F:GTPase activity"/>
    <property type="evidence" value="ECO:0007669"/>
    <property type="project" value="InterPro"/>
</dbReference>
<dbReference type="GO" id="GO:0003746">
    <property type="term" value="F:translation elongation factor activity"/>
    <property type="evidence" value="ECO:0007669"/>
    <property type="project" value="UniProtKB-UniRule"/>
</dbReference>
<dbReference type="GO" id="GO:0032790">
    <property type="term" value="P:ribosome disassembly"/>
    <property type="evidence" value="ECO:0007669"/>
    <property type="project" value="TreeGrafter"/>
</dbReference>
<dbReference type="CDD" id="cd01886">
    <property type="entry name" value="EF-G"/>
    <property type="match status" value="1"/>
</dbReference>
<dbReference type="CDD" id="cd16262">
    <property type="entry name" value="EFG_III"/>
    <property type="match status" value="1"/>
</dbReference>
<dbReference type="CDD" id="cd01434">
    <property type="entry name" value="EFG_mtEFG1_IV"/>
    <property type="match status" value="1"/>
</dbReference>
<dbReference type="CDD" id="cd03713">
    <property type="entry name" value="EFG_mtEFG_C"/>
    <property type="match status" value="1"/>
</dbReference>
<dbReference type="CDD" id="cd04088">
    <property type="entry name" value="EFG_mtEFG_II"/>
    <property type="match status" value="1"/>
</dbReference>
<dbReference type="FunFam" id="2.40.30.10:FF:000006">
    <property type="entry name" value="Elongation factor G"/>
    <property type="match status" value="1"/>
</dbReference>
<dbReference type="FunFam" id="3.30.230.10:FF:000003">
    <property type="entry name" value="Elongation factor G"/>
    <property type="match status" value="1"/>
</dbReference>
<dbReference type="FunFam" id="3.30.70.240:FF:000001">
    <property type="entry name" value="Elongation factor G"/>
    <property type="match status" value="1"/>
</dbReference>
<dbReference type="FunFam" id="3.30.70.870:FF:000001">
    <property type="entry name" value="Elongation factor G"/>
    <property type="match status" value="1"/>
</dbReference>
<dbReference type="FunFam" id="3.40.50.300:FF:000029">
    <property type="entry name" value="Elongation factor G"/>
    <property type="match status" value="1"/>
</dbReference>
<dbReference type="Gene3D" id="3.30.230.10">
    <property type="match status" value="1"/>
</dbReference>
<dbReference type="Gene3D" id="3.30.70.240">
    <property type="match status" value="1"/>
</dbReference>
<dbReference type="Gene3D" id="3.30.70.870">
    <property type="entry name" value="Elongation Factor G (Translational Gtpase), domain 3"/>
    <property type="match status" value="1"/>
</dbReference>
<dbReference type="Gene3D" id="3.40.50.300">
    <property type="entry name" value="P-loop containing nucleotide triphosphate hydrolases"/>
    <property type="match status" value="1"/>
</dbReference>
<dbReference type="Gene3D" id="2.40.30.10">
    <property type="entry name" value="Translation factors"/>
    <property type="match status" value="1"/>
</dbReference>
<dbReference type="HAMAP" id="MF_00054_B">
    <property type="entry name" value="EF_G_EF_2_B"/>
    <property type="match status" value="1"/>
</dbReference>
<dbReference type="InterPro" id="IPR053905">
    <property type="entry name" value="EF-G-like_DII"/>
</dbReference>
<dbReference type="InterPro" id="IPR041095">
    <property type="entry name" value="EFG_II"/>
</dbReference>
<dbReference type="InterPro" id="IPR009022">
    <property type="entry name" value="EFG_III"/>
</dbReference>
<dbReference type="InterPro" id="IPR035647">
    <property type="entry name" value="EFG_III/V"/>
</dbReference>
<dbReference type="InterPro" id="IPR047872">
    <property type="entry name" value="EFG_IV"/>
</dbReference>
<dbReference type="InterPro" id="IPR035649">
    <property type="entry name" value="EFG_V"/>
</dbReference>
<dbReference type="InterPro" id="IPR000640">
    <property type="entry name" value="EFG_V-like"/>
</dbReference>
<dbReference type="InterPro" id="IPR031157">
    <property type="entry name" value="G_TR_CS"/>
</dbReference>
<dbReference type="InterPro" id="IPR027417">
    <property type="entry name" value="P-loop_NTPase"/>
</dbReference>
<dbReference type="InterPro" id="IPR020568">
    <property type="entry name" value="Ribosomal_Su5_D2-typ_SF"/>
</dbReference>
<dbReference type="InterPro" id="IPR014721">
    <property type="entry name" value="Ribsml_uS5_D2-typ_fold_subgr"/>
</dbReference>
<dbReference type="InterPro" id="IPR005225">
    <property type="entry name" value="Small_GTP-bd"/>
</dbReference>
<dbReference type="InterPro" id="IPR000795">
    <property type="entry name" value="T_Tr_GTP-bd_dom"/>
</dbReference>
<dbReference type="InterPro" id="IPR009000">
    <property type="entry name" value="Transl_B-barrel_sf"/>
</dbReference>
<dbReference type="InterPro" id="IPR004540">
    <property type="entry name" value="Transl_elong_EFG/EF2"/>
</dbReference>
<dbReference type="InterPro" id="IPR005517">
    <property type="entry name" value="Transl_elong_EFG/EF2_IV"/>
</dbReference>
<dbReference type="NCBIfam" id="TIGR00484">
    <property type="entry name" value="EF-G"/>
    <property type="match status" value="1"/>
</dbReference>
<dbReference type="NCBIfam" id="NF009379">
    <property type="entry name" value="PRK12740.1-3"/>
    <property type="match status" value="1"/>
</dbReference>
<dbReference type="NCBIfam" id="NF009381">
    <property type="entry name" value="PRK12740.1-5"/>
    <property type="match status" value="1"/>
</dbReference>
<dbReference type="NCBIfam" id="TIGR00231">
    <property type="entry name" value="small_GTP"/>
    <property type="match status" value="1"/>
</dbReference>
<dbReference type="PANTHER" id="PTHR43261:SF1">
    <property type="entry name" value="RIBOSOME-RELEASING FACTOR 2, MITOCHONDRIAL"/>
    <property type="match status" value="1"/>
</dbReference>
<dbReference type="PANTHER" id="PTHR43261">
    <property type="entry name" value="TRANSLATION ELONGATION FACTOR G-RELATED"/>
    <property type="match status" value="1"/>
</dbReference>
<dbReference type="Pfam" id="PF22042">
    <property type="entry name" value="EF-G_D2"/>
    <property type="match status" value="1"/>
</dbReference>
<dbReference type="Pfam" id="PF00679">
    <property type="entry name" value="EFG_C"/>
    <property type="match status" value="1"/>
</dbReference>
<dbReference type="Pfam" id="PF14492">
    <property type="entry name" value="EFG_III"/>
    <property type="match status" value="1"/>
</dbReference>
<dbReference type="Pfam" id="PF03764">
    <property type="entry name" value="EFG_IV"/>
    <property type="match status" value="1"/>
</dbReference>
<dbReference type="Pfam" id="PF00009">
    <property type="entry name" value="GTP_EFTU"/>
    <property type="match status" value="1"/>
</dbReference>
<dbReference type="PRINTS" id="PR00315">
    <property type="entry name" value="ELONGATNFCT"/>
</dbReference>
<dbReference type="SMART" id="SM00838">
    <property type="entry name" value="EFG_C"/>
    <property type="match status" value="1"/>
</dbReference>
<dbReference type="SMART" id="SM00889">
    <property type="entry name" value="EFG_IV"/>
    <property type="match status" value="1"/>
</dbReference>
<dbReference type="SUPFAM" id="SSF54980">
    <property type="entry name" value="EF-G C-terminal domain-like"/>
    <property type="match status" value="2"/>
</dbReference>
<dbReference type="SUPFAM" id="SSF52540">
    <property type="entry name" value="P-loop containing nucleoside triphosphate hydrolases"/>
    <property type="match status" value="1"/>
</dbReference>
<dbReference type="SUPFAM" id="SSF54211">
    <property type="entry name" value="Ribosomal protein S5 domain 2-like"/>
    <property type="match status" value="1"/>
</dbReference>
<dbReference type="SUPFAM" id="SSF50447">
    <property type="entry name" value="Translation proteins"/>
    <property type="match status" value="1"/>
</dbReference>
<dbReference type="PROSITE" id="PS00301">
    <property type="entry name" value="G_TR_1"/>
    <property type="match status" value="1"/>
</dbReference>
<dbReference type="PROSITE" id="PS51722">
    <property type="entry name" value="G_TR_2"/>
    <property type="match status" value="1"/>
</dbReference>
<protein>
    <recommendedName>
        <fullName evidence="1">Elongation factor G 1</fullName>
        <shortName evidence="1">EF-G 1</shortName>
    </recommendedName>
</protein>
<sequence length="697" mass="77345">MARTTPLERYRNFGIMAHIDAGKTTTTERILFYTGVTHKIGEVHEGTTVMDWMEQERERGITITSAATTAFWRDHRLNIIDTPGHVDFTIEVERSLRVLDGACAVFDAVQGVQPQSETVWRQADKYEVPRICFINKMDRVGADYFHAVDTIREKLGARPLPLHVPIGAEDKFRGMVDLLKMKGITFDDETMGAKYQEVEIPADLAAQAKEYRAKLEETVAEIDDELMAKYLDGKPLSNDELMRGIRRGTLEMKFFPVLCGTAFKNKGVQQILDAVVDFLPSPVDIPAMKGVDAKGNDVVRKTSDAEPFSALAFKIMNDPFVGNLTFFRVYSGRLEAGSYVYNSTKDKKERIGRLLQMHANKREEIKEVYAGDIAAAVGLRASTTGDTLCAEDAPVILERMEFPEPVIHIAIEPKTKGDQDKMGVALQRLQMEDPSFRVHTDEETGQTIIGGMGELHLEILVDRMFREFKVEANVGKPQVAYRETITRTVEAEGRYIRQTGGRGQYGHCWLRLHPQEPGKGFEFENAIVGGVIPKEFISPIQKGIEEAMTSGVLAGYPMVDLKVELFDGSYHDVDSSEMAFKIAGSMGFKEGAAKASPVLLEPIMAVEVTTPDDYMGDVIGDLNSRRGKIHAMNPRAGVQVIEAHVPLAEMFGYATDLRSKTQGRATYSMQFAHYAQVPASIAETIVTKAKGVAAGAK</sequence>
<comment type="function">
    <text evidence="1">Catalyzes the GTP-dependent ribosomal translocation step during translation elongation. During this step, the ribosome changes from the pre-translocational (PRE) to the post-translocational (POST) state as the newly formed A-site-bound peptidyl-tRNA and P-site-bound deacylated tRNA move to the P and E sites, respectively. Catalyzes the coordinated movement of the two tRNA molecules, the mRNA and conformational changes in the ribosome.</text>
</comment>
<comment type="subcellular location">
    <subcellularLocation>
        <location evidence="1">Cytoplasm</location>
    </subcellularLocation>
</comment>
<comment type="similarity">
    <text evidence="1">Belongs to the TRAFAC class translation factor GTPase superfamily. Classic translation factor GTPase family. EF-G/EF-2 subfamily.</text>
</comment>
<reference key="1">
    <citation type="submission" date="2006-01" db="EMBL/GenBank/DDBJ databases">
        <title>Complete sequence of Anaeromyxobacter dehalogenans 2CP-C.</title>
        <authorList>
            <person name="Copeland A."/>
            <person name="Lucas S."/>
            <person name="Lapidus A."/>
            <person name="Barry K."/>
            <person name="Detter J.C."/>
            <person name="Glavina T."/>
            <person name="Hammon N."/>
            <person name="Israni S."/>
            <person name="Pitluck S."/>
            <person name="Brettin T."/>
            <person name="Bruce D."/>
            <person name="Han C."/>
            <person name="Tapia R."/>
            <person name="Gilna P."/>
            <person name="Kiss H."/>
            <person name="Schmutz J."/>
            <person name="Larimer F."/>
            <person name="Land M."/>
            <person name="Kyrpides N."/>
            <person name="Anderson I."/>
            <person name="Sanford R.A."/>
            <person name="Ritalahti K.M."/>
            <person name="Thomas H.S."/>
            <person name="Kirby J.R."/>
            <person name="Zhulin I.B."/>
            <person name="Loeffler F.E."/>
            <person name="Richardson P."/>
        </authorList>
    </citation>
    <scope>NUCLEOTIDE SEQUENCE [LARGE SCALE GENOMIC DNA]</scope>
    <source>
        <strain>2CP-C</strain>
    </source>
</reference>
<evidence type="ECO:0000255" key="1">
    <source>
        <dbReference type="HAMAP-Rule" id="MF_00054"/>
    </source>
</evidence>
<accession>Q2IJ93</accession>